<evidence type="ECO:0000255" key="1">
    <source>
        <dbReference type="PROSITE-ProRule" id="PRU00691"/>
    </source>
</evidence>
<evidence type="ECO:0000269" key="2">
    <source>
    </source>
</evidence>
<evidence type="ECO:0000269" key="3">
    <source>
    </source>
</evidence>
<evidence type="ECO:0000269" key="4">
    <source>
    </source>
</evidence>
<evidence type="ECO:0000269" key="5">
    <source>
    </source>
</evidence>
<evidence type="ECO:0000269" key="6">
    <source>
    </source>
</evidence>
<evidence type="ECO:0000269" key="7">
    <source>
    </source>
</evidence>
<evidence type="ECO:0000269" key="8">
    <source>
    </source>
</evidence>
<evidence type="ECO:0000269" key="9">
    <source>
    </source>
</evidence>
<evidence type="ECO:0000269" key="10">
    <source>
    </source>
</evidence>
<evidence type="ECO:0000269" key="11">
    <source>
    </source>
</evidence>
<evidence type="ECO:0000269" key="12">
    <source>
    </source>
</evidence>
<evidence type="ECO:0000269" key="13">
    <source>
    </source>
</evidence>
<evidence type="ECO:0000269" key="14">
    <source>
    </source>
</evidence>
<evidence type="ECO:0000269" key="15">
    <source ref="4"/>
</evidence>
<evidence type="ECO:0000303" key="16">
    <source>
    </source>
</evidence>
<evidence type="ECO:0000303" key="17">
    <source>
    </source>
</evidence>
<evidence type="ECO:0000303" key="18">
    <source>
    </source>
</evidence>
<evidence type="ECO:0000305" key="19"/>
<evidence type="ECO:0000305" key="20">
    <source>
    </source>
</evidence>
<evidence type="ECO:0000305" key="21">
    <source>
    </source>
</evidence>
<evidence type="ECO:0000305" key="22">
    <source>
    </source>
</evidence>
<evidence type="ECO:0000305" key="23">
    <source>
    </source>
</evidence>
<evidence type="ECO:0000305" key="24">
    <source ref="23"/>
</evidence>
<evidence type="ECO:0007744" key="25">
    <source>
        <dbReference type="PDB" id="4DSQ"/>
    </source>
</evidence>
<evidence type="ECO:0007744" key="26">
    <source>
        <dbReference type="PDB" id="4DSR"/>
    </source>
</evidence>
<evidence type="ECO:0007744" key="27">
    <source>
        <dbReference type="PDB" id="4DSS"/>
    </source>
</evidence>
<evidence type="ECO:0007744" key="28">
    <source>
        <dbReference type="PDB" id="4H86"/>
    </source>
</evidence>
<evidence type="ECO:0007744" key="29">
    <source>
        <dbReference type="PDB" id="4OWY"/>
    </source>
</evidence>
<evidence type="ECO:0007744" key="30">
    <source>
        <dbReference type="PDB" id="7BVV"/>
    </source>
</evidence>
<evidence type="ECO:0007744" key="31">
    <source>
    </source>
</evidence>
<evidence type="ECO:0007744" key="32">
    <source>
    </source>
</evidence>
<evidence type="ECO:0007744" key="33">
    <source>
    </source>
</evidence>
<evidence type="ECO:0007829" key="34">
    <source>
        <dbReference type="PDB" id="4H86"/>
    </source>
</evidence>
<evidence type="ECO:0007829" key="35">
    <source>
        <dbReference type="PDB" id="4OWY"/>
    </source>
</evidence>
<protein>
    <recommendedName>
        <fullName evidence="19">Peroxiredoxin AHP1</fullName>
        <shortName>Prx</shortName>
        <ecNumber evidence="2 13">1.11.1.24</ecNumber>
    </recommendedName>
    <alternativeName>
        <fullName evidence="18">Alkyl hydroperoxide reductase</fullName>
        <shortName>AHPC1</shortName>
    </alternativeName>
    <alternativeName>
        <fullName evidence="16">Cytoplasmic thiol peroxidase 3</fullName>
        <shortName evidence="16">cTPx 3</shortName>
    </alternativeName>
    <alternativeName>
        <fullName evidence="16">Thiol-specific antioxidant II</fullName>
        <shortName evidence="16">TSA II</shortName>
    </alternativeName>
    <alternativeName>
        <fullName evidence="17">Thioredoxin peroxidase type II</fullName>
        <shortName>TPx type II</shortName>
    </alternativeName>
    <alternativeName>
        <fullName evidence="19">Thioredoxin-dependent peroxiredoxin AHP1</fullName>
    </alternativeName>
</protein>
<dbReference type="EC" id="1.11.1.24" evidence="2 13"/>
<dbReference type="EMBL" id="X89514">
    <property type="protein sequence ID" value="CAA61687.1"/>
    <property type="molecule type" value="Genomic_DNA"/>
</dbReference>
<dbReference type="EMBL" id="Z73281">
    <property type="protein sequence ID" value="CAA97676.1"/>
    <property type="molecule type" value="Genomic_DNA"/>
</dbReference>
<dbReference type="EMBL" id="U53878">
    <property type="protein sequence ID" value="AAB67554.1"/>
    <property type="molecule type" value="Genomic_DNA"/>
</dbReference>
<dbReference type="EMBL" id="BK006945">
    <property type="protein sequence ID" value="DAA09425.1"/>
    <property type="molecule type" value="Genomic_DNA"/>
</dbReference>
<dbReference type="PIR" id="S64946">
    <property type="entry name" value="S64946"/>
</dbReference>
<dbReference type="RefSeq" id="NP_013210.1">
    <property type="nucleotide sequence ID" value="NM_001181996.1"/>
</dbReference>
<dbReference type="PDB" id="4DSQ">
    <property type="method" value="X-ray"/>
    <property type="resolution" value="2.40 A"/>
    <property type="chains" value="A/B/C/D=1-176"/>
</dbReference>
<dbReference type="PDB" id="4DSR">
    <property type="method" value="X-ray"/>
    <property type="resolution" value="2.91 A"/>
    <property type="chains" value="A/B/C/D=1-176"/>
</dbReference>
<dbReference type="PDB" id="4DSS">
    <property type="method" value="X-ray"/>
    <property type="resolution" value="2.10 A"/>
    <property type="chains" value="A=1-176"/>
</dbReference>
<dbReference type="PDB" id="4H86">
    <property type="method" value="X-ray"/>
    <property type="resolution" value="2.00 A"/>
    <property type="chains" value="A=1-176"/>
</dbReference>
<dbReference type="PDB" id="4OWY">
    <property type="method" value="X-ray"/>
    <property type="resolution" value="2.20 A"/>
    <property type="chains" value="A/B/C/D=1-176"/>
</dbReference>
<dbReference type="PDB" id="7BVV">
    <property type="method" value="X-ray"/>
    <property type="resolution" value="2.12 A"/>
    <property type="chains" value="A=1-176"/>
</dbReference>
<dbReference type="PDBsum" id="4DSQ"/>
<dbReference type="PDBsum" id="4DSR"/>
<dbReference type="PDBsum" id="4DSS"/>
<dbReference type="PDBsum" id="4H86"/>
<dbReference type="PDBsum" id="4OWY"/>
<dbReference type="PDBsum" id="7BVV"/>
<dbReference type="BMRB" id="P38013"/>
<dbReference type="SMR" id="P38013"/>
<dbReference type="BioGRID" id="31382">
    <property type="interactions" value="138"/>
</dbReference>
<dbReference type="DIP" id="DIP-6375N"/>
<dbReference type="FunCoup" id="P38013">
    <property type="interactions" value="767"/>
</dbReference>
<dbReference type="IntAct" id="P38013">
    <property type="interactions" value="29"/>
</dbReference>
<dbReference type="MINT" id="P38013"/>
<dbReference type="STRING" id="4932.YLR109W"/>
<dbReference type="iPTMnet" id="P38013"/>
<dbReference type="PaxDb" id="4932-YLR109W"/>
<dbReference type="PeptideAtlas" id="P38013"/>
<dbReference type="TopDownProteomics" id="P38013"/>
<dbReference type="EnsemblFungi" id="YLR109W_mRNA">
    <property type="protein sequence ID" value="YLR109W"/>
    <property type="gene ID" value="YLR109W"/>
</dbReference>
<dbReference type="GeneID" id="850799"/>
<dbReference type="KEGG" id="sce:YLR109W"/>
<dbReference type="AGR" id="SGD:S000004099"/>
<dbReference type="SGD" id="S000004099">
    <property type="gene designation" value="AHP1"/>
</dbReference>
<dbReference type="VEuPathDB" id="FungiDB:YLR109W"/>
<dbReference type="eggNOG" id="KOG0541">
    <property type="taxonomic scope" value="Eukaryota"/>
</dbReference>
<dbReference type="GeneTree" id="ENSGT00390000018173"/>
<dbReference type="HOGENOM" id="CLU_072440_1_1_1"/>
<dbReference type="InParanoid" id="P38013"/>
<dbReference type="OMA" id="YTMNGWA"/>
<dbReference type="OrthoDB" id="1882547at2759"/>
<dbReference type="BioCyc" id="YEAST:YLR109W-MONOMER"/>
<dbReference type="Reactome" id="R-SCE-3299685">
    <property type="pathway name" value="Detoxification of Reactive Oxygen Species"/>
</dbReference>
<dbReference type="Reactome" id="R-SCE-5628897">
    <property type="pathway name" value="TP53 Regulates Metabolic Genes"/>
</dbReference>
<dbReference type="BioGRID-ORCS" id="850799">
    <property type="hits" value="2 hits in 10 CRISPR screens"/>
</dbReference>
<dbReference type="EvolutionaryTrace" id="P38013"/>
<dbReference type="PRO" id="PR:P38013"/>
<dbReference type="Proteomes" id="UP000002311">
    <property type="component" value="Chromosome XII"/>
</dbReference>
<dbReference type="RNAct" id="P38013">
    <property type="molecule type" value="protein"/>
</dbReference>
<dbReference type="GO" id="GO:0005737">
    <property type="term" value="C:cytoplasm"/>
    <property type="evidence" value="ECO:0000314"/>
    <property type="project" value="SGD"/>
</dbReference>
<dbReference type="GO" id="GO:0005829">
    <property type="term" value="C:cytosol"/>
    <property type="evidence" value="ECO:0007005"/>
    <property type="project" value="SGD"/>
</dbReference>
<dbReference type="GO" id="GO:0005739">
    <property type="term" value="C:mitochondrion"/>
    <property type="evidence" value="ECO:0000318"/>
    <property type="project" value="GO_Central"/>
</dbReference>
<dbReference type="GO" id="GO:0005777">
    <property type="term" value="C:peroxisome"/>
    <property type="evidence" value="ECO:0000318"/>
    <property type="project" value="GO_Central"/>
</dbReference>
<dbReference type="GO" id="GO:0005886">
    <property type="term" value="C:plasma membrane"/>
    <property type="evidence" value="ECO:0007005"/>
    <property type="project" value="SGD"/>
</dbReference>
<dbReference type="GO" id="GO:0008379">
    <property type="term" value="F:thioredoxin peroxidase activity"/>
    <property type="evidence" value="ECO:0000314"/>
    <property type="project" value="SGD"/>
</dbReference>
<dbReference type="GO" id="GO:0045454">
    <property type="term" value="P:cell redox homeostasis"/>
    <property type="evidence" value="ECO:0000314"/>
    <property type="project" value="SGD"/>
</dbReference>
<dbReference type="GO" id="GO:0034599">
    <property type="term" value="P:cellular response to oxidative stress"/>
    <property type="evidence" value="ECO:0000316"/>
    <property type="project" value="SGD"/>
</dbReference>
<dbReference type="GO" id="GO:0042744">
    <property type="term" value="P:hydrogen peroxide catabolic process"/>
    <property type="evidence" value="ECO:0000318"/>
    <property type="project" value="GO_Central"/>
</dbReference>
<dbReference type="GO" id="GO:0010038">
    <property type="term" value="P:response to metal ion"/>
    <property type="evidence" value="ECO:0000315"/>
    <property type="project" value="SGD"/>
</dbReference>
<dbReference type="CDD" id="cd03013">
    <property type="entry name" value="PRX5_like"/>
    <property type="match status" value="1"/>
</dbReference>
<dbReference type="FunFam" id="3.40.30.10:FF:000316">
    <property type="entry name" value="Peroxiredoxin AHP1"/>
    <property type="match status" value="1"/>
</dbReference>
<dbReference type="Gene3D" id="3.40.30.10">
    <property type="entry name" value="Glutaredoxin"/>
    <property type="match status" value="1"/>
</dbReference>
<dbReference type="InterPro" id="IPR037944">
    <property type="entry name" value="PRX5-like"/>
</dbReference>
<dbReference type="InterPro" id="IPR013740">
    <property type="entry name" value="Redoxin"/>
</dbReference>
<dbReference type="InterPro" id="IPR036249">
    <property type="entry name" value="Thioredoxin-like_sf"/>
</dbReference>
<dbReference type="InterPro" id="IPR013766">
    <property type="entry name" value="Thioredoxin_domain"/>
</dbReference>
<dbReference type="PANTHER" id="PTHR10430">
    <property type="entry name" value="PEROXIREDOXIN"/>
    <property type="match status" value="1"/>
</dbReference>
<dbReference type="PANTHER" id="PTHR10430:SF16">
    <property type="entry name" value="PEROXIREDOXIN-5, MITOCHONDRIAL"/>
    <property type="match status" value="1"/>
</dbReference>
<dbReference type="Pfam" id="PF08534">
    <property type="entry name" value="Redoxin"/>
    <property type="match status" value="1"/>
</dbReference>
<dbReference type="SUPFAM" id="SSF52833">
    <property type="entry name" value="Thioredoxin-like"/>
    <property type="match status" value="1"/>
</dbReference>
<dbReference type="PROSITE" id="PS51352">
    <property type="entry name" value="THIOREDOXIN_2"/>
    <property type="match status" value="1"/>
</dbReference>
<reference key="1">
    <citation type="journal article" date="1997" name="Yeast">
        <title>Sequence analysis of a 37.6 kbp cosmid clone from the right arm of Saccharomyces cerevisiae chromosome XII, carrying YAP3, HOG1, SNR6, tRNA-Arg3 and 23 new open reading frames, among which several homologies to proteins involved in cell division control and to mammalian growth factors and other animal proteins are found.</title>
        <authorList>
            <person name="Verhasselt P."/>
            <person name="Volckaert G."/>
        </authorList>
    </citation>
    <scope>NUCLEOTIDE SEQUENCE [GENOMIC DNA]</scope>
    <source>
        <strain>ATCC 90840 / EAY235 / FY23</strain>
    </source>
</reference>
<reference key="2">
    <citation type="journal article" date="1997" name="Nature">
        <title>The nucleotide sequence of Saccharomyces cerevisiae chromosome XII.</title>
        <authorList>
            <person name="Johnston M."/>
            <person name="Hillier L.W."/>
            <person name="Riles L."/>
            <person name="Albermann K."/>
            <person name="Andre B."/>
            <person name="Ansorge W."/>
            <person name="Benes V."/>
            <person name="Brueckner M."/>
            <person name="Delius H."/>
            <person name="Dubois E."/>
            <person name="Duesterhoeft A."/>
            <person name="Entian K.-D."/>
            <person name="Floeth M."/>
            <person name="Goffeau A."/>
            <person name="Hebling U."/>
            <person name="Heumann K."/>
            <person name="Heuss-Neitzel D."/>
            <person name="Hilbert H."/>
            <person name="Hilger F."/>
            <person name="Kleine K."/>
            <person name="Koetter P."/>
            <person name="Louis E.J."/>
            <person name="Messenguy F."/>
            <person name="Mewes H.-W."/>
            <person name="Miosga T."/>
            <person name="Moestl D."/>
            <person name="Mueller-Auer S."/>
            <person name="Nentwich U."/>
            <person name="Obermaier B."/>
            <person name="Piravandi E."/>
            <person name="Pohl T.M."/>
            <person name="Portetelle D."/>
            <person name="Purnelle B."/>
            <person name="Rechmann S."/>
            <person name="Rieger M."/>
            <person name="Rinke M."/>
            <person name="Rose M."/>
            <person name="Scharfe M."/>
            <person name="Scherens B."/>
            <person name="Scholler P."/>
            <person name="Schwager C."/>
            <person name="Schwarz S."/>
            <person name="Underwood A.P."/>
            <person name="Urrestarazu L.A."/>
            <person name="Vandenbol M."/>
            <person name="Verhasselt P."/>
            <person name="Vierendeels F."/>
            <person name="Voet M."/>
            <person name="Volckaert G."/>
            <person name="Voss H."/>
            <person name="Wambutt R."/>
            <person name="Wedler E."/>
            <person name="Wedler H."/>
            <person name="Zimmermann F.K."/>
            <person name="Zollner A."/>
            <person name="Hani J."/>
            <person name="Hoheisel J.D."/>
        </authorList>
    </citation>
    <scope>NUCLEOTIDE SEQUENCE [LARGE SCALE GENOMIC DNA]</scope>
    <source>
        <strain>ATCC 204508 / S288c</strain>
    </source>
</reference>
<reference key="3">
    <citation type="journal article" date="2014" name="G3 (Bethesda)">
        <title>The reference genome sequence of Saccharomyces cerevisiae: Then and now.</title>
        <authorList>
            <person name="Engel S.R."/>
            <person name="Dietrich F.S."/>
            <person name="Fisk D.G."/>
            <person name="Binkley G."/>
            <person name="Balakrishnan R."/>
            <person name="Costanzo M.C."/>
            <person name="Dwight S.S."/>
            <person name="Hitz B.C."/>
            <person name="Karra K."/>
            <person name="Nash R.S."/>
            <person name="Weng S."/>
            <person name="Wong E.D."/>
            <person name="Lloyd P."/>
            <person name="Skrzypek M.S."/>
            <person name="Miyasato S.R."/>
            <person name="Simison M."/>
            <person name="Cherry J.M."/>
        </authorList>
    </citation>
    <scope>GENOME REANNOTATION</scope>
    <source>
        <strain>ATCC 204508 / S288c</strain>
    </source>
</reference>
<reference key="4">
    <citation type="submission" date="2005-05" db="UniProtKB">
        <authorList>
            <person name="Bienvenut W.V."/>
            <person name="Peters C."/>
        </authorList>
    </citation>
    <scope>PROTEIN SEQUENCE OF 2-8; 16-48; 80-102 AND 114-176</scope>
    <scope>CLEAVAGE OF INITIATOR METHIONINE</scope>
    <scope>ACETYLATION AT SER-2</scope>
    <scope>IDENTIFICATION BY MASS SPECTROMETRY</scope>
</reference>
<reference key="5">
    <citation type="journal article" date="2003" name="Eukaryot. Cell">
        <title>Attachment of the ubiquitin-related protein Urm1p to the antioxidant protein Ahp1p.</title>
        <authorList>
            <person name="Goehring A.S."/>
            <person name="Rivers D.M."/>
            <person name="Sprague G.F. Jr."/>
        </authorList>
    </citation>
    <scope>PROTEIN SEQUENCE OF 8-15; 33-41; 80-102 AND 125-176</scope>
    <scope>URMYLATION</scope>
</reference>
<reference key="6">
    <citation type="journal article" date="1999" name="Biochemistry">
        <title>Purification and characterization of a second type thioredoxin peroxidase (type II TPx) from Saccharomyces cerevisiae.</title>
        <authorList>
            <person name="Jeong J.S."/>
            <person name="Kwon S.J."/>
            <person name="Kang S.W."/>
            <person name="Rhee S.G."/>
            <person name="Kim K."/>
        </authorList>
    </citation>
    <scope>PROTEIN SEQUENCE OF 16-41; 49-68; 82-96; 114-123 AND 142-150</scope>
    <scope>POST-TRANSLATIONAL MODIFICATION</scope>
    <scope>DISULFIDE BONDS</scope>
    <scope>CATALYTIC ACTIVITY</scope>
    <scope>BIOPHYSICOCHEMICAL PROPERTIES</scope>
</reference>
<reference key="7">
    <citation type="journal article" date="1999" name="J. Biol. Chem.">
        <title>In vivo characterization of a thioredoxin H target protein defines a new peroxiredoxin family.</title>
        <authorList>
            <person name="Verdoucq L."/>
            <person name="Vignols F."/>
            <person name="Jacquot J.-P."/>
            <person name="Chartier Y."/>
            <person name="Meyer Y."/>
        </authorList>
    </citation>
    <scope>PARTIAL PROTEIN SEQUENCE OF 33-37; 82-96; 126-139 AND 157-170</scope>
    <scope>FUNCTION</scope>
    <scope>CATALYTIC ACTIVITY</scope>
    <scope>BIOPHYSICOCHEMICAL PROPERTIES</scope>
    <scope>SUBUNIT</scope>
</reference>
<reference key="8">
    <citation type="journal article" date="1994" name="Electrophoresis">
        <title>Protein identifications for a Saccharomyces cerevisiae protein database.</title>
        <authorList>
            <person name="Garrels J.I."/>
            <person name="Futcher B."/>
            <person name="Kobayashi R."/>
            <person name="Latter G.I."/>
            <person name="Schwender B."/>
            <person name="Volpe T."/>
            <person name="Warner J.R."/>
            <person name="McLaughlin C.S."/>
        </authorList>
    </citation>
    <scope>PROTEIN SEQUENCE OF 82-99</scope>
    <source>
        <strain>ATCC 204508 / S288c</strain>
    </source>
</reference>
<reference key="9">
    <citation type="journal article" date="1999" name="Biosci. Biotechnol. Biochem.">
        <title>Involvement of thioredoxin peroxidase type II (Ahp1p) of Saccharomyces cerevisiae in Mn2+ homeostasis.</title>
        <authorList>
            <person name="Farcasanu I.C."/>
            <person name="Hirata D."/>
            <person name="Tsuchiya E."/>
            <person name="Mizuta K."/>
            <person name="Miyakawa T."/>
        </authorList>
    </citation>
    <scope>FUNCTION</scope>
</reference>
<reference key="10">
    <citation type="journal article" date="1999" name="J. Biol. Chem.">
        <title>A new antioxidant with alkyl hydroperoxide defense properties in yeast.</title>
        <authorList>
            <person name="Lee J."/>
            <person name="Spector D."/>
            <person name="Godon C."/>
            <person name="Labarre J."/>
            <person name="Toledano M.B."/>
        </authorList>
    </citation>
    <scope>FUNCTION</scope>
    <scope>SUBUNIT</scope>
</reference>
<reference key="11">
    <citation type="journal article" date="2000" name="J. Biol. Chem.">
        <title>Distinct physiological functions of thiol peroxidase isoenzymes in Saccharomyces cerevisiae.</title>
        <authorList>
            <person name="Park S.G."/>
            <person name="Cha M.-K."/>
            <person name="Jeong W."/>
            <person name="Kim I.-H."/>
        </authorList>
    </citation>
    <scope>FUNCTION</scope>
    <scope>INDUCTION</scope>
    <scope>SUBCELLULAR LOCATION</scope>
</reference>
<reference key="12">
    <citation type="journal article" date="2003" name="Nature">
        <title>Global analysis of protein expression in yeast.</title>
        <authorList>
            <person name="Ghaemmaghami S."/>
            <person name="Huh W.-K."/>
            <person name="Bower K."/>
            <person name="Howson R.W."/>
            <person name="Belle A."/>
            <person name="Dephoure N."/>
            <person name="O'Shea E.K."/>
            <person name="Weissman J.S."/>
        </authorList>
    </citation>
    <scope>LEVEL OF PROTEIN EXPRESSION [LARGE SCALE ANALYSIS]</scope>
</reference>
<reference key="13">
    <citation type="journal article" date="2008" name="Mol. Cell. Proteomics">
        <title>A multidimensional chromatography technology for in-depth phosphoproteome analysis.</title>
        <authorList>
            <person name="Albuquerque C.P."/>
            <person name="Smolka M.B."/>
            <person name="Payne S.H."/>
            <person name="Bafna V."/>
            <person name="Eng J."/>
            <person name="Zhou H."/>
        </authorList>
    </citation>
    <scope>PHOSPHORYLATION [LARGE SCALE ANALYSIS] AT SER-59</scope>
    <scope>IDENTIFICATION BY MASS SPECTROMETRY [LARGE SCALE ANALYSIS]</scope>
</reference>
<reference key="14">
    <citation type="journal article" date="2009" name="Science">
        <title>Global analysis of Cdk1 substrate phosphorylation sites provides insights into evolution.</title>
        <authorList>
            <person name="Holt L.J."/>
            <person name="Tuch B.B."/>
            <person name="Villen J."/>
            <person name="Johnson A.D."/>
            <person name="Gygi S.P."/>
            <person name="Morgan D.O."/>
        </authorList>
    </citation>
    <scope>PHOSPHORYLATION [LARGE SCALE ANALYSIS] AT SER-28 AND SER-116</scope>
    <scope>IDENTIFICATION BY MASS SPECTROMETRY [LARGE SCALE ANALYSIS]</scope>
</reference>
<reference key="15">
    <citation type="journal article" date="2010" name="J. Biol. Chem.">
        <title>Peroxiredoxin Ahp1 acts as a receptor for alkylhydroperoxides to induce disulfide bond formation in the Cad1 transcription factor.</title>
        <authorList>
            <person name="Iwai K."/>
            <person name="Naganuma A."/>
            <person name="Kuge S."/>
        </authorList>
    </citation>
    <scope>FUNCTION</scope>
</reference>
<reference key="16">
    <citation type="journal article" date="2011" name="Proc. Natl. Acad. Sci. U.S.A.">
        <title>Role of the ubiquitin-like protein Urm1 as a noncanonical lysine-directed protein modifier.</title>
        <authorList>
            <person name="Van der Veen A.G."/>
            <person name="Schorpp K."/>
            <person name="Schlieker C."/>
            <person name="Buti L."/>
            <person name="Damon J.R."/>
            <person name="Spooner E."/>
            <person name="Ploegh H.L."/>
            <person name="Jentsch S."/>
        </authorList>
    </citation>
    <scope>URMYLATION AT LYS-32</scope>
    <scope>MUTAGENESIS OF LYS-32</scope>
</reference>
<reference key="17">
    <citation type="journal article" date="2012" name="Proteomics">
        <title>Sites of ubiquitin attachment in Saccharomyces cerevisiae.</title>
        <authorList>
            <person name="Starita L.M."/>
            <person name="Lo R.S."/>
            <person name="Eng J.K."/>
            <person name="von Haller P.D."/>
            <person name="Fields S."/>
        </authorList>
    </citation>
    <scope>UBIQUITINATION [LARGE SCALE ANALYSIS] AT LYS-48 AND LYS-113</scope>
    <scope>IDENTIFICATION BY MASS SPECTROMETRY [LARGE SCALE ANALYSIS]</scope>
</reference>
<reference key="18">
    <citation type="journal article" date="2020" name="Redox Biol.">
        <title>Redox requirements for ubiquitin-like urmylation of Ahp1, a 2-Cys peroxiredoxin from yeast.</title>
        <authorList>
            <person name="Brachmann C."/>
            <person name="Kaduhr L."/>
            <person name="Juedes A."/>
            <person name="Ravichandran K.E."/>
            <person name="West J.D."/>
            <person name="Glatt S."/>
            <person name="Schaffrath R."/>
        </authorList>
    </citation>
    <scope>MUTAGENESIS OF CYS-31 AND CYS-62</scope>
</reference>
<reference key="19">
    <citation type="journal article" date="2022" name="EMBO J.">
        <title>E2/E3-independent ubiquitin-like protein conjugation by Urm1 is directly coupled to cysteine persulfidation.</title>
        <authorList>
            <person name="Ravichandran K.E."/>
            <person name="Kaduhr L."/>
            <person name="Skupien-Rabian B."/>
            <person name="Shvetsova E."/>
            <person name="Sokolowski M."/>
            <person name="Krutyholowa R."/>
            <person name="Kwasna D."/>
            <person name="Brachmann C."/>
            <person name="Lin S."/>
            <person name="Guzman Perez S."/>
            <person name="Wilk P."/>
            <person name="Koesters M."/>
            <person name="Grudnik P."/>
            <person name="Jankowska U."/>
            <person name="Leidel S.A."/>
            <person name="Schaffrath R."/>
            <person name="Glatt S."/>
        </authorList>
    </citation>
    <scope>SULFHYDRATION AT CYS-62 AND CYS-120</scope>
    <scope>UBIQUITINATION AT LYS-81</scope>
    <scope>SUMOYLATION AT LYS-156</scope>
    <scope>URMYLATION AT LYS-32; LYS-48; LYS-79; LYS-81; LYS-107; LYS-124 AND LYS-156</scope>
    <scope>MUTAGENESIS OF CYS-31 AND CYS-62</scope>
</reference>
<reference key="20">
    <citation type="journal article" date="2003" name="Biochemistry">
        <title>Characterization of the yeast peroxiredoxin Ahp1 in its reduced active and overoxidized inactive forms using NMR.</title>
        <authorList>
            <person name="Trivelli X."/>
            <person name="Krimm I."/>
            <person name="Ebel C."/>
            <person name="Verdoucq L."/>
            <person name="Prouzet-Mauleon V."/>
            <person name="Chartier Y."/>
            <person name="Tsan P."/>
            <person name="Lauquin G."/>
            <person name="Meyer Y."/>
            <person name="Lancelin J.-M."/>
        </authorList>
    </citation>
    <scope>3D-STRUCTURE MODELING</scope>
    <scope>STRUCTURE BY NMR</scope>
</reference>
<reference evidence="25 26 27" key="21">
    <citation type="journal article" date="2012" name="J. Biol. Chem.">
        <title>Structural snapshots of yeast alkyl hydroperoxide reductase Ahp1 peroxiredoxin reveal a novel two-cysteine mechanism of electron transfer to eliminate reactive oxygen species.</title>
        <authorList>
            <person name="Lian F.M."/>
            <person name="Yu J."/>
            <person name="Ma X.X."/>
            <person name="Yu X.J."/>
            <person name="Chen Y."/>
            <person name="Zhou C.Z."/>
        </authorList>
    </citation>
    <scope>X-RAY CRYSTALLOGRAPHY (2.10 ANGSTROMS) IN COMPLEX WITH TRX2</scope>
    <scope>ACTIVE SITE</scope>
    <scope>DISULFIDE BOND</scope>
    <scope>SUBUNIT</scope>
    <scope>MUTAGENESIS OF CYS-31; CYS-62 AND CYS-120</scope>
</reference>
<reference evidence="28" key="22">
    <citation type="submission" date="2012-09" db="PDB data bank">
        <title>Crystal structure of Ahp1 from Saccharomyces cerevisiae in reduced form.</title>
        <authorList>
            <person name="Liu M."/>
            <person name="Wang F."/>
            <person name="Qiu R."/>
            <person name="Wu T."/>
            <person name="Gu S."/>
            <person name="Tang R."/>
            <person name="Ji C."/>
        </authorList>
    </citation>
    <scope>X-RAY CRYSTALLOGRAPHY (2.00 ANGSTROMS)</scope>
</reference>
<reference evidence="29" key="23">
    <citation type="submission" date="2014-02" db="PDB data bank">
        <title>Crystal structure of Ahp1 from Saccharomyces cerevisiae. Investigating the electron transfers.</title>
        <authorList>
            <person name="Schultz L."/>
            <person name="Genu V."/>
            <person name="Breyer C.A."/>
            <person name="dos Santos V.F."/>
            <person name="Guimaraes B.G."/>
            <person name="de Oliveira M.A."/>
            <person name="Netto L.E.S."/>
        </authorList>
    </citation>
    <scope>X-RAY CRYSTALLOGRAPHY (2.20 ANGSTROMS)</scope>
    <scope>DISULFIDE BONDS</scope>
</reference>
<reference evidence="30" key="24">
    <citation type="journal article" date="2020" name="Int. J. Biol. Macromol.">
        <title>Crystal structure of sulfonic peroxiredoxin Ahp1 in complex with thioredoxin Trx2 mimics a conformational intermediate during the catalytic cycle.</title>
        <authorList>
            <person name="Lian F.M."/>
            <person name="Jiang Y.L."/>
            <person name="Yang W."/>
            <person name="Yang X."/>
        </authorList>
    </citation>
    <scope>X-RAY CRYSTALLOGRAPHY (2.12 ANGSTROMS)</scope>
    <scope>DISULFIDE BONDS</scope>
</reference>
<feature type="initiator methionine" description="Removed" evidence="15">
    <location>
        <position position="1"/>
    </location>
</feature>
<feature type="chain" id="PRO_0000056610" description="Peroxiredoxin AHP1">
    <location>
        <begin position="2"/>
        <end position="176"/>
    </location>
</feature>
<feature type="domain" description="Thioredoxin" evidence="1">
    <location>
        <begin position="9"/>
        <end position="176"/>
    </location>
</feature>
<feature type="active site" description="Cysteine sulfenic acid (-SOH) intermediate" evidence="21">
    <location>
        <position position="62"/>
    </location>
</feature>
<feature type="modified residue" description="N-acetylserine" evidence="15">
    <location>
        <position position="2"/>
    </location>
</feature>
<feature type="modified residue" description="Phosphoserine" evidence="32">
    <location>
        <position position="28"/>
    </location>
</feature>
<feature type="modified residue" description="Phosphoserine" evidence="31">
    <location>
        <position position="59"/>
    </location>
</feature>
<feature type="modified residue" description="Cysteine persulfide" evidence="12">
    <location>
        <position position="62"/>
    </location>
</feature>
<feature type="modified residue" description="Phosphoserine" evidence="32">
    <location>
        <position position="116"/>
    </location>
</feature>
<feature type="modified residue" description="Cysteine persulfide" evidence="12">
    <location>
        <position position="120"/>
    </location>
</feature>
<feature type="disulfide bond" description="Interchain (with C-31 in TRX2); transient" evidence="9 11 27 30">
    <location>
        <position position="31"/>
    </location>
</feature>
<feature type="disulfide bond" description="Interchain (with C-62); in linked form" evidence="9 25 29">
    <location>
        <position position="31"/>
    </location>
</feature>
<feature type="disulfide bond" description="Interchain (with C-31); in linked form" evidence="9 25 29">
    <location>
        <position position="62"/>
    </location>
</feature>
<feature type="cross-link" description="Glycyl lysine isopeptide (Lys-Gly) (interchain with G-Cter in URM1)" evidence="10 12 20">
    <location>
        <position position="32"/>
    </location>
</feature>
<feature type="cross-link" description="Glycyl lysine isopeptide (Lys-Gly) (interchain with G-Cter in ubiquitin); alternate" evidence="33">
    <location>
        <position position="48"/>
    </location>
</feature>
<feature type="cross-link" description="Glycyl lysine isopeptide (Lys-Gly) (interchain with G-Cter in URM1); alternate" evidence="12">
    <location>
        <position position="48"/>
    </location>
</feature>
<feature type="cross-link" description="Glycyl lysine isopeptide (Lys-Gly) (interchain with G-Cter in URM1)" evidence="12">
    <location>
        <position position="79"/>
    </location>
</feature>
<feature type="cross-link" description="Glycyl lysine isopeptide (Lys-Gly) (interchain with G-Cter in ubiquitin); alternate" evidence="12">
    <location>
        <position position="81"/>
    </location>
</feature>
<feature type="cross-link" description="Glycyl lysine isopeptide (Lys-Gly) (interchain with G-Cter in URM1); alternate" evidence="12">
    <location>
        <position position="81"/>
    </location>
</feature>
<feature type="cross-link" description="Glycyl lysine isopeptide (Lys-Gly) (interchain with G-Cter in URM1)" evidence="12">
    <location>
        <position position="107"/>
    </location>
</feature>
<feature type="cross-link" description="Glycyl lysine isopeptide (Lys-Gly) (interchain with G-Cter in ubiquitin)" evidence="33">
    <location>
        <position position="113"/>
    </location>
</feature>
<feature type="cross-link" description="Glycyl lysine isopeptide (Lys-Gly) (interchain with G-Cter in URM1)" evidence="12">
    <location>
        <position position="124"/>
    </location>
</feature>
<feature type="cross-link" description="Glycyl lysine isopeptide (Lys-Gly) (interchain with G-Cter in SUMO); alternate" evidence="12">
    <location>
        <position position="156"/>
    </location>
</feature>
<feature type="cross-link" description="Glycyl lysine isopeptide (Lys-Gly) (interchain with G-Cter in URM1); alternate" evidence="10 12">
    <location>
        <position position="156"/>
    </location>
</feature>
<feature type="mutagenesis site" description="Abolishes catalytic activity, but does not impact URM1 conjugation." evidence="9 10 12">
    <original>C</original>
    <variation>S</variation>
    <location>
        <position position="31"/>
    </location>
</feature>
<feature type="mutagenesis site" description="Prevents urmylation of AHP1." evidence="8">
    <original>K</original>
    <variation>R</variation>
    <location>
        <position position="32"/>
    </location>
</feature>
<feature type="mutagenesis site" description="Abolishes catalytic activity, and completely abolishes URM1 conjugation." evidence="9 10 12">
    <original>C</original>
    <variation>S</variation>
    <location>
        <position position="62"/>
    </location>
</feature>
<feature type="mutagenesis site" description="No effect on tert-butyl hydroperoxide consumption." evidence="9">
    <original>C</original>
    <variation>S</variation>
    <location>
        <position position="120"/>
    </location>
</feature>
<feature type="sequence conflict" description="In Ref. 6; AA sequence." evidence="19" ref="6">
    <original>I</original>
    <variation>T</variation>
    <location>
        <position position="21"/>
    </location>
</feature>
<feature type="sequence conflict" description="In Ref. 6; AA sequence." evidence="19" ref="6">
    <original>S</original>
    <variation>V</variation>
    <location>
        <position position="65"/>
    </location>
</feature>
<feature type="sequence conflict" description="In Ref. 6; AA sequence." evidence="19" ref="6">
    <original>I</original>
    <variation>E</variation>
    <location>
        <position position="87"/>
    </location>
</feature>
<feature type="turn" evidence="34">
    <location>
        <begin position="3"/>
        <end position="6"/>
    </location>
</feature>
<feature type="strand" evidence="34">
    <location>
        <begin position="15"/>
        <end position="18"/>
    </location>
</feature>
<feature type="strand" evidence="34">
    <location>
        <begin position="23"/>
        <end position="25"/>
    </location>
</feature>
<feature type="strand" evidence="35">
    <location>
        <begin position="26"/>
        <end position="28"/>
    </location>
</feature>
<feature type="helix" evidence="34">
    <location>
        <begin position="29"/>
        <end position="31"/>
    </location>
</feature>
<feature type="strand" evidence="34">
    <location>
        <begin position="35"/>
        <end position="38"/>
    </location>
</feature>
<feature type="helix" evidence="34">
    <location>
        <begin position="39"/>
        <end position="45"/>
    </location>
</feature>
<feature type="strand" evidence="34">
    <location>
        <begin position="47"/>
        <end position="53"/>
    </location>
</feature>
<feature type="helix" evidence="34">
    <location>
        <begin position="60"/>
        <end position="64"/>
    </location>
</feature>
<feature type="helix" evidence="34">
    <location>
        <begin position="67"/>
        <end position="80"/>
    </location>
</feature>
<feature type="strand" evidence="34">
    <location>
        <begin position="85"/>
        <end position="92"/>
    </location>
</feature>
<feature type="helix" evidence="34">
    <location>
        <begin position="94"/>
        <end position="103"/>
    </location>
</feature>
<feature type="strand" evidence="34">
    <location>
        <begin position="110"/>
        <end position="116"/>
    </location>
</feature>
<feature type="helix" evidence="34">
    <location>
        <begin position="118"/>
        <end position="120"/>
    </location>
</feature>
<feature type="helix" evidence="34">
    <location>
        <begin position="121"/>
        <end position="125"/>
    </location>
</feature>
<feature type="strand" evidence="34">
    <location>
        <begin position="129"/>
        <end position="133"/>
    </location>
</feature>
<feature type="strand" evidence="34">
    <location>
        <begin position="136"/>
        <end position="139"/>
    </location>
</feature>
<feature type="strand" evidence="34">
    <location>
        <begin position="141"/>
        <end position="147"/>
    </location>
</feature>
<feature type="strand" evidence="34">
    <location>
        <begin position="150"/>
        <end position="156"/>
    </location>
</feature>
<feature type="turn" evidence="34">
    <location>
        <begin position="160"/>
        <end position="162"/>
    </location>
</feature>
<feature type="helix" evidence="34">
    <location>
        <begin position="169"/>
        <end position="173"/>
    </location>
</feature>
<name>AHP1_YEAST</name>
<accession>P38013</accession>
<accession>D6VYA9</accession>
<sequence>MSDLVNKKFPAGDYKFQYIAISQSDADSESCKMPQTVEWSKLISENKKVIITGAPAAFSPTCTVSHIPGYINYLDELVKEKEVDQVIVVTVDNPFANQAWAKSLGVKDTTHIKFASDPGCAFTKSIGFELAVGDGVYWSGRWAMVVENGIVTYAAKETNPGTDVTVSSVESVLAHL</sequence>
<proteinExistence type="evidence at protein level"/>
<keyword id="KW-0002">3D-structure</keyword>
<keyword id="KW-0007">Acetylation</keyword>
<keyword id="KW-0049">Antioxidant</keyword>
<keyword id="KW-0963">Cytoplasm</keyword>
<keyword id="KW-0903">Direct protein sequencing</keyword>
<keyword id="KW-1015">Disulfide bond</keyword>
<keyword id="KW-1017">Isopeptide bond</keyword>
<keyword id="KW-0560">Oxidoreductase</keyword>
<keyword id="KW-0575">Peroxidase</keyword>
<keyword id="KW-0597">Phosphoprotein</keyword>
<keyword id="KW-0676">Redox-active center</keyword>
<keyword id="KW-1185">Reference proteome</keyword>
<keyword id="KW-0832">Ubl conjugation</keyword>
<gene>
    <name evidence="18" type="primary">AHP1</name>
    <name type="ordered locus">YLR109W</name>
    <name type="ORF">L2916</name>
    <name type="ORF">L9354.5</name>
</gene>
<organism>
    <name type="scientific">Saccharomyces cerevisiae (strain ATCC 204508 / S288c)</name>
    <name type="common">Baker's yeast</name>
    <dbReference type="NCBI Taxonomy" id="559292"/>
    <lineage>
        <taxon>Eukaryota</taxon>
        <taxon>Fungi</taxon>
        <taxon>Dikarya</taxon>
        <taxon>Ascomycota</taxon>
        <taxon>Saccharomycotina</taxon>
        <taxon>Saccharomycetes</taxon>
        <taxon>Saccharomycetales</taxon>
        <taxon>Saccharomycetaceae</taxon>
        <taxon>Saccharomyces</taxon>
    </lineage>
</organism>
<comment type="function">
    <text evidence="2 3 4 7 14">Thiol-specific peroxidase that catalyzes the reduction of hydrogen peroxide and organic hydroperoxides to water and alcohols, respectively. Plays a role in cell protection against oxidative stress by detoxifying peroxides and as sensor of hydrogen peroxide-mediated signaling events. Preferentially eliminates organic peroxides rather than hydrogen peroxide (PubMed:10391912, PubMed:10681558, PubMed:9988687). Relays alkyl hydroperoxides as a signal to the transcription factor CAD1/YAP2 by inducing the formation of intramolecular disulfide bonds in CAD1, which causes its nuclear accumulation and activation (PubMed:20145245). Involved in cellular Mn(2+) homeostasis (PubMed:10635552).</text>
</comment>
<comment type="catalytic activity">
    <reaction evidence="2 13">
        <text>a hydroperoxide + [thioredoxin]-dithiol = an alcohol + [thioredoxin]-disulfide + H2O</text>
        <dbReference type="Rhea" id="RHEA:62620"/>
        <dbReference type="Rhea" id="RHEA-COMP:10698"/>
        <dbReference type="Rhea" id="RHEA-COMP:10700"/>
        <dbReference type="ChEBI" id="CHEBI:15377"/>
        <dbReference type="ChEBI" id="CHEBI:29950"/>
        <dbReference type="ChEBI" id="CHEBI:30879"/>
        <dbReference type="ChEBI" id="CHEBI:35924"/>
        <dbReference type="ChEBI" id="CHEBI:50058"/>
        <dbReference type="EC" id="1.11.1.24"/>
    </reaction>
</comment>
<comment type="biophysicochemical properties">
    <kinetics>
        <KM evidence="13">150 uM for H(2)O(2)</KM>
        <KM evidence="2">14 uM for H(2)O(2)</KM>
        <KM evidence="13">8 uM for cumene hydroperoxide</KM>
        <KM evidence="13">45 uM for tert-butyl hydroperoxide</KM>
        <KM evidence="9">76.9 uM for tert-butyl hydroperoxide</KM>
        <KM evidence="13">3 uM for TRX1</KM>
        <KM evidence="13">2 uM for TRX2</KM>
        <KM evidence="9">1.3 uM for TRX2</KM>
        <Vmax evidence="13">20.0 umol/min/mg enzyme for H(2)O(2)</Vmax>
        <Vmax evidence="13">14.0 umol/min/mg enzyme for cumene hydroperoxide</Vmax>
        <Vmax evidence="13">17.0 umol/min/mg enzyme for tert-butyl hydroperoxide</Vmax>
        <Vmax evidence="13">17.0 umol/min/mg enzyme for TRX1</Vmax>
        <Vmax evidence="13">16.0 umol/min/mg enzyme for TRX2</Vmax>
    </kinetics>
    <phDependence>
        <text evidence="13">Optimum pH is 6.5.</text>
    </phDependence>
</comment>
<comment type="subunit">
    <text evidence="2 9 13 14">Homodimer; disulfide-linked, upon oxidation.</text>
</comment>
<comment type="interaction">
    <interactant intactId="EBI-2382">
        <id>P38013</id>
    </interactant>
    <interactant intactId="EBI-2464632">
        <id>P34230</id>
        <label>PXA2</label>
    </interactant>
    <organismsDiffer>false</organismsDiffer>
    <experiments>2</experiments>
</comment>
<comment type="subcellular location">
    <subcellularLocation>
        <location evidence="4">Cytoplasm</location>
    </subcellularLocation>
</comment>
<comment type="induction">
    <text evidence="4">By H(2)O(2).</text>
</comment>
<comment type="PTM">
    <text evidence="5 8 10 12">Conjugated to URM1, a ubiquitin-like protein, in response to oxidative stresses. The attachment of URM1 to lysine residues exclusively depends on the presence of a peroxidatic cysteine in the target protein, with low specificity for the particular residue, motif, or structural context at which urmylation can occur. The URM1-conjugation reaction is mechanistically and directly coupled to the process of cysteine persulfidation, transfering the sulfur atom of the URM1 thiocarboxyl group to redox-active cysteine residues in the target protein if it is exposed to oxidative conditions.</text>
</comment>
<comment type="PTM">
    <text evidence="22">Persulfidated on specific redox-active cysteine residues. Persulfidation (also called protein S-sulfhydration) may provide a molecular mechanism that enables cells to protect vulnerable cysteine residues from reactive oxygen species (ROS) under stress conditions.</text>
</comment>
<comment type="miscellaneous">
    <text evidence="21">The active site is a conserved redox-active cysteine residue, the peroxidatic cysteine (C(P)), which makes the nucleophilic attack on the peroxide substrate. The peroxide oxidizes the C(P)-SH to cysteine sulfenic acid (C(P)-SOH), which then reacts with another cysteine residue, the resolving cysteine (C(R)), to form a disulfide bridge. The disulfide is subsequently reduced by an appropriate electron donor to complete the catalytic cycle. In this typical 2-Cys Prx, C(R) is provided by the other dimeric subunit to form an intersubunit disulfide. The disulfide is subsequently reduced by thioredoxin.</text>
</comment>
<comment type="miscellaneous">
    <text evidence="6">Present with 16228 molecules/cell in log phase SD medium.</text>
</comment>
<comment type="similarity">
    <text evidence="19">Belongs to the peroxiredoxin family. Prx5 subfamily.</text>
</comment>
<comment type="caution">
    <text evidence="21 23 24">Biochemical and mutational analysis assigned Cys-120 as the resolving cysteine (C(R)) (PubMed:9888818). However, crystal structures showed that Cys-120 is deeply buried within the protein and revealed formation of a disulfide bond between the peroxidatic cysteine Cys-62 and the therefore more likely C(R) Cys-31 (PubMed:22474296, Ref.23).</text>
</comment>